<dbReference type="EC" id="6.3.4.2" evidence="1"/>
<dbReference type="EMBL" id="CP000033">
    <property type="protein sequence ID" value="AAV42128.1"/>
    <property type="molecule type" value="Genomic_DNA"/>
</dbReference>
<dbReference type="RefSeq" id="WP_011254085.1">
    <property type="nucleotide sequence ID" value="NC_006814.3"/>
</dbReference>
<dbReference type="RefSeq" id="YP_193159.1">
    <property type="nucleotide sequence ID" value="NC_006814.3"/>
</dbReference>
<dbReference type="SMR" id="Q5FME6"/>
<dbReference type="STRING" id="272621.LBA0233"/>
<dbReference type="KEGG" id="lac:LBA0233"/>
<dbReference type="PATRIC" id="fig|272621.13.peg.223"/>
<dbReference type="eggNOG" id="COG0504">
    <property type="taxonomic scope" value="Bacteria"/>
</dbReference>
<dbReference type="HOGENOM" id="CLU_011675_5_0_9"/>
<dbReference type="OrthoDB" id="9801107at2"/>
<dbReference type="BioCyc" id="LACI272621:G1G49-227-MONOMER"/>
<dbReference type="UniPathway" id="UPA00159">
    <property type="reaction ID" value="UER00277"/>
</dbReference>
<dbReference type="Proteomes" id="UP000006381">
    <property type="component" value="Chromosome"/>
</dbReference>
<dbReference type="GO" id="GO:0005829">
    <property type="term" value="C:cytosol"/>
    <property type="evidence" value="ECO:0007669"/>
    <property type="project" value="TreeGrafter"/>
</dbReference>
<dbReference type="GO" id="GO:0005524">
    <property type="term" value="F:ATP binding"/>
    <property type="evidence" value="ECO:0007669"/>
    <property type="project" value="UniProtKB-KW"/>
</dbReference>
<dbReference type="GO" id="GO:0003883">
    <property type="term" value="F:CTP synthase activity"/>
    <property type="evidence" value="ECO:0007669"/>
    <property type="project" value="UniProtKB-UniRule"/>
</dbReference>
<dbReference type="GO" id="GO:0004359">
    <property type="term" value="F:glutaminase activity"/>
    <property type="evidence" value="ECO:0007669"/>
    <property type="project" value="RHEA"/>
</dbReference>
<dbReference type="GO" id="GO:0042802">
    <property type="term" value="F:identical protein binding"/>
    <property type="evidence" value="ECO:0007669"/>
    <property type="project" value="TreeGrafter"/>
</dbReference>
<dbReference type="GO" id="GO:0046872">
    <property type="term" value="F:metal ion binding"/>
    <property type="evidence" value="ECO:0007669"/>
    <property type="project" value="UniProtKB-KW"/>
</dbReference>
<dbReference type="GO" id="GO:0044210">
    <property type="term" value="P:'de novo' CTP biosynthetic process"/>
    <property type="evidence" value="ECO:0007669"/>
    <property type="project" value="UniProtKB-UniRule"/>
</dbReference>
<dbReference type="GO" id="GO:0019856">
    <property type="term" value="P:pyrimidine nucleobase biosynthetic process"/>
    <property type="evidence" value="ECO:0007669"/>
    <property type="project" value="TreeGrafter"/>
</dbReference>
<dbReference type="CDD" id="cd03113">
    <property type="entry name" value="CTPS_N"/>
    <property type="match status" value="1"/>
</dbReference>
<dbReference type="CDD" id="cd01746">
    <property type="entry name" value="GATase1_CTP_Synthase"/>
    <property type="match status" value="1"/>
</dbReference>
<dbReference type="FunFam" id="3.40.50.300:FF:000009">
    <property type="entry name" value="CTP synthase"/>
    <property type="match status" value="1"/>
</dbReference>
<dbReference type="FunFam" id="3.40.50.880:FF:000002">
    <property type="entry name" value="CTP synthase"/>
    <property type="match status" value="1"/>
</dbReference>
<dbReference type="Gene3D" id="3.40.50.880">
    <property type="match status" value="1"/>
</dbReference>
<dbReference type="Gene3D" id="3.40.50.300">
    <property type="entry name" value="P-loop containing nucleotide triphosphate hydrolases"/>
    <property type="match status" value="1"/>
</dbReference>
<dbReference type="HAMAP" id="MF_01227">
    <property type="entry name" value="PyrG"/>
    <property type="match status" value="1"/>
</dbReference>
<dbReference type="InterPro" id="IPR029062">
    <property type="entry name" value="Class_I_gatase-like"/>
</dbReference>
<dbReference type="InterPro" id="IPR004468">
    <property type="entry name" value="CTP_synthase"/>
</dbReference>
<dbReference type="InterPro" id="IPR017456">
    <property type="entry name" value="CTP_synthase_N"/>
</dbReference>
<dbReference type="InterPro" id="IPR017926">
    <property type="entry name" value="GATASE"/>
</dbReference>
<dbReference type="InterPro" id="IPR033828">
    <property type="entry name" value="GATase1_CTP_Synthase"/>
</dbReference>
<dbReference type="InterPro" id="IPR027417">
    <property type="entry name" value="P-loop_NTPase"/>
</dbReference>
<dbReference type="NCBIfam" id="NF003792">
    <property type="entry name" value="PRK05380.1"/>
    <property type="match status" value="1"/>
</dbReference>
<dbReference type="NCBIfam" id="TIGR00337">
    <property type="entry name" value="PyrG"/>
    <property type="match status" value="1"/>
</dbReference>
<dbReference type="PANTHER" id="PTHR11550">
    <property type="entry name" value="CTP SYNTHASE"/>
    <property type="match status" value="1"/>
</dbReference>
<dbReference type="PANTHER" id="PTHR11550:SF0">
    <property type="entry name" value="CTP SYNTHASE-RELATED"/>
    <property type="match status" value="1"/>
</dbReference>
<dbReference type="Pfam" id="PF06418">
    <property type="entry name" value="CTP_synth_N"/>
    <property type="match status" value="1"/>
</dbReference>
<dbReference type="Pfam" id="PF00117">
    <property type="entry name" value="GATase"/>
    <property type="match status" value="1"/>
</dbReference>
<dbReference type="SUPFAM" id="SSF52317">
    <property type="entry name" value="Class I glutamine amidotransferase-like"/>
    <property type="match status" value="1"/>
</dbReference>
<dbReference type="SUPFAM" id="SSF52540">
    <property type="entry name" value="P-loop containing nucleoside triphosphate hydrolases"/>
    <property type="match status" value="1"/>
</dbReference>
<dbReference type="PROSITE" id="PS51273">
    <property type="entry name" value="GATASE_TYPE_1"/>
    <property type="match status" value="1"/>
</dbReference>
<accession>Q5FME6</accession>
<sequence length="539" mass="60661">MTKYIFVTGGVVSSLGKGITASSLGRLLKNRGLKVTMQKFDPYINIDPGTMNPYQHGEVYVTDDGTEADLDLGHYERIVDVRTSKYSNVTTGKIYQEVLEKERRGDYHGATVQVIPHITNMIKKKIMRAALTTDSDVIISEIGGTVGDIESTPFMEAIRQMRREVGEDNVMYIHCTLVPLLHAAHEMKTKPTQHSVAELRSIGIQPNMLVLRAEQPIDQEHKDKISDFTDVPVDRIIESIDAPSLFDVPLEFQKQGMDQKVCDFLHLESPKPEADMEAWKKLDERAKNLEHKTKITLVGKYVELEDAYISVTDALQHAGYLYNTKIEVDKVQAEDITEDNIAEIMKDSDGLIVPGGFGTRGLEGMITAIKYARENDIPFLGICLGMQMASVEFARNVLNLEDANSAEAEPNCKNNIIDIMADKRDEENIGGTLRLGLYPATLKEGTKTREAYDNQDVIQERHRHRFEFNNKYREAFEKAGMVFSGVSPDNRLVEIIELPKKKFFIAAQYHPEFLSRPQRPEGLFKSFIGAASGLPAQKF</sequence>
<organism>
    <name type="scientific">Lactobacillus acidophilus (strain ATCC 700396 / NCK56 / N2 / NCFM)</name>
    <dbReference type="NCBI Taxonomy" id="272621"/>
    <lineage>
        <taxon>Bacteria</taxon>
        <taxon>Bacillati</taxon>
        <taxon>Bacillota</taxon>
        <taxon>Bacilli</taxon>
        <taxon>Lactobacillales</taxon>
        <taxon>Lactobacillaceae</taxon>
        <taxon>Lactobacillus</taxon>
    </lineage>
</organism>
<gene>
    <name evidence="1" type="primary">pyrG</name>
    <name type="ordered locus">LBA0233</name>
</gene>
<keyword id="KW-0067">ATP-binding</keyword>
<keyword id="KW-0315">Glutamine amidotransferase</keyword>
<keyword id="KW-0436">Ligase</keyword>
<keyword id="KW-0460">Magnesium</keyword>
<keyword id="KW-0479">Metal-binding</keyword>
<keyword id="KW-0547">Nucleotide-binding</keyword>
<keyword id="KW-0665">Pyrimidine biosynthesis</keyword>
<keyword id="KW-1185">Reference proteome</keyword>
<evidence type="ECO:0000255" key="1">
    <source>
        <dbReference type="HAMAP-Rule" id="MF_01227"/>
    </source>
</evidence>
<protein>
    <recommendedName>
        <fullName evidence="1">CTP synthase</fullName>
        <ecNumber evidence="1">6.3.4.2</ecNumber>
    </recommendedName>
    <alternativeName>
        <fullName evidence="1">Cytidine 5'-triphosphate synthase</fullName>
    </alternativeName>
    <alternativeName>
        <fullName evidence="1">Cytidine triphosphate synthetase</fullName>
        <shortName evidence="1">CTP synthetase</shortName>
        <shortName evidence="1">CTPS</shortName>
    </alternativeName>
    <alternativeName>
        <fullName evidence="1">UTP--ammonia ligase</fullName>
    </alternativeName>
</protein>
<comment type="function">
    <text evidence="1">Catalyzes the ATP-dependent amination of UTP to CTP with either L-glutamine or ammonia as the source of nitrogen. Regulates intracellular CTP levels through interactions with the four ribonucleotide triphosphates.</text>
</comment>
<comment type="catalytic activity">
    <reaction evidence="1">
        <text>UTP + L-glutamine + ATP + H2O = CTP + L-glutamate + ADP + phosphate + 2 H(+)</text>
        <dbReference type="Rhea" id="RHEA:26426"/>
        <dbReference type="ChEBI" id="CHEBI:15377"/>
        <dbReference type="ChEBI" id="CHEBI:15378"/>
        <dbReference type="ChEBI" id="CHEBI:29985"/>
        <dbReference type="ChEBI" id="CHEBI:30616"/>
        <dbReference type="ChEBI" id="CHEBI:37563"/>
        <dbReference type="ChEBI" id="CHEBI:43474"/>
        <dbReference type="ChEBI" id="CHEBI:46398"/>
        <dbReference type="ChEBI" id="CHEBI:58359"/>
        <dbReference type="ChEBI" id="CHEBI:456216"/>
        <dbReference type="EC" id="6.3.4.2"/>
    </reaction>
</comment>
<comment type="catalytic activity">
    <reaction evidence="1">
        <text>L-glutamine + H2O = L-glutamate + NH4(+)</text>
        <dbReference type="Rhea" id="RHEA:15889"/>
        <dbReference type="ChEBI" id="CHEBI:15377"/>
        <dbReference type="ChEBI" id="CHEBI:28938"/>
        <dbReference type="ChEBI" id="CHEBI:29985"/>
        <dbReference type="ChEBI" id="CHEBI:58359"/>
    </reaction>
</comment>
<comment type="catalytic activity">
    <reaction evidence="1">
        <text>UTP + NH4(+) + ATP = CTP + ADP + phosphate + 2 H(+)</text>
        <dbReference type="Rhea" id="RHEA:16597"/>
        <dbReference type="ChEBI" id="CHEBI:15378"/>
        <dbReference type="ChEBI" id="CHEBI:28938"/>
        <dbReference type="ChEBI" id="CHEBI:30616"/>
        <dbReference type="ChEBI" id="CHEBI:37563"/>
        <dbReference type="ChEBI" id="CHEBI:43474"/>
        <dbReference type="ChEBI" id="CHEBI:46398"/>
        <dbReference type="ChEBI" id="CHEBI:456216"/>
    </reaction>
</comment>
<comment type="activity regulation">
    <text evidence="1">Allosterically activated by GTP, when glutamine is the substrate; GTP has no effect on the reaction when ammonia is the substrate. The allosteric effector GTP functions by stabilizing the protein conformation that binds the tetrahedral intermediate(s) formed during glutamine hydrolysis. Inhibited by the product CTP, via allosteric rather than competitive inhibition.</text>
</comment>
<comment type="pathway">
    <text evidence="1">Pyrimidine metabolism; CTP biosynthesis via de novo pathway; CTP from UDP: step 2/2.</text>
</comment>
<comment type="subunit">
    <text evidence="1">Homotetramer.</text>
</comment>
<comment type="miscellaneous">
    <text evidence="1">CTPSs have evolved a hybrid strategy for distinguishing between UTP and CTP. The overlapping regions of the product feedback inhibitory and substrate sites recognize a common feature in both compounds, the triphosphate moiety. To differentiate isosteric substrate and product pyrimidine rings, an additional pocket far from the expected kinase/ligase catalytic site, specifically recognizes the cytosine and ribose portions of the product inhibitor.</text>
</comment>
<comment type="similarity">
    <text evidence="1">Belongs to the CTP synthase family.</text>
</comment>
<feature type="chain" id="PRO_0000266138" description="CTP synthase">
    <location>
        <begin position="1"/>
        <end position="539"/>
    </location>
</feature>
<feature type="domain" description="Glutamine amidotransferase type-1" evidence="1">
    <location>
        <begin position="294"/>
        <end position="537"/>
    </location>
</feature>
<feature type="region of interest" description="Amidoligase domain" evidence="1">
    <location>
        <begin position="1"/>
        <end position="267"/>
    </location>
</feature>
<feature type="active site" description="Nucleophile; for glutamine hydrolysis" evidence="1">
    <location>
        <position position="383"/>
    </location>
</feature>
<feature type="active site" evidence="1">
    <location>
        <position position="510"/>
    </location>
</feature>
<feature type="active site" evidence="1">
    <location>
        <position position="512"/>
    </location>
</feature>
<feature type="binding site" evidence="1">
    <location>
        <position position="13"/>
    </location>
    <ligand>
        <name>CTP</name>
        <dbReference type="ChEBI" id="CHEBI:37563"/>
        <note>allosteric inhibitor</note>
    </ligand>
</feature>
<feature type="binding site" evidence="1">
    <location>
        <position position="13"/>
    </location>
    <ligand>
        <name>UTP</name>
        <dbReference type="ChEBI" id="CHEBI:46398"/>
    </ligand>
</feature>
<feature type="binding site" evidence="1">
    <location>
        <begin position="14"/>
        <end position="19"/>
    </location>
    <ligand>
        <name>ATP</name>
        <dbReference type="ChEBI" id="CHEBI:30616"/>
    </ligand>
</feature>
<feature type="binding site" evidence="1">
    <location>
        <position position="54"/>
    </location>
    <ligand>
        <name>L-glutamine</name>
        <dbReference type="ChEBI" id="CHEBI:58359"/>
    </ligand>
</feature>
<feature type="binding site" evidence="1">
    <location>
        <position position="71"/>
    </location>
    <ligand>
        <name>ATP</name>
        <dbReference type="ChEBI" id="CHEBI:30616"/>
    </ligand>
</feature>
<feature type="binding site" evidence="1">
    <location>
        <position position="71"/>
    </location>
    <ligand>
        <name>Mg(2+)</name>
        <dbReference type="ChEBI" id="CHEBI:18420"/>
    </ligand>
</feature>
<feature type="binding site" evidence="1">
    <location>
        <position position="141"/>
    </location>
    <ligand>
        <name>Mg(2+)</name>
        <dbReference type="ChEBI" id="CHEBI:18420"/>
    </ligand>
</feature>
<feature type="binding site" evidence="1">
    <location>
        <begin position="148"/>
        <end position="150"/>
    </location>
    <ligand>
        <name>CTP</name>
        <dbReference type="ChEBI" id="CHEBI:37563"/>
        <note>allosteric inhibitor</note>
    </ligand>
</feature>
<feature type="binding site" evidence="1">
    <location>
        <begin position="188"/>
        <end position="193"/>
    </location>
    <ligand>
        <name>CTP</name>
        <dbReference type="ChEBI" id="CHEBI:37563"/>
        <note>allosteric inhibitor</note>
    </ligand>
</feature>
<feature type="binding site" evidence="1">
    <location>
        <begin position="188"/>
        <end position="193"/>
    </location>
    <ligand>
        <name>UTP</name>
        <dbReference type="ChEBI" id="CHEBI:46398"/>
    </ligand>
</feature>
<feature type="binding site" evidence="1">
    <location>
        <position position="224"/>
    </location>
    <ligand>
        <name>CTP</name>
        <dbReference type="ChEBI" id="CHEBI:37563"/>
        <note>allosteric inhibitor</note>
    </ligand>
</feature>
<feature type="binding site" evidence="1">
    <location>
        <position position="224"/>
    </location>
    <ligand>
        <name>UTP</name>
        <dbReference type="ChEBI" id="CHEBI:46398"/>
    </ligand>
</feature>
<feature type="binding site" evidence="1">
    <location>
        <position position="356"/>
    </location>
    <ligand>
        <name>L-glutamine</name>
        <dbReference type="ChEBI" id="CHEBI:58359"/>
    </ligand>
</feature>
<feature type="binding site" evidence="1">
    <location>
        <begin position="384"/>
        <end position="387"/>
    </location>
    <ligand>
        <name>L-glutamine</name>
        <dbReference type="ChEBI" id="CHEBI:58359"/>
    </ligand>
</feature>
<feature type="binding site" evidence="1">
    <location>
        <position position="407"/>
    </location>
    <ligand>
        <name>L-glutamine</name>
        <dbReference type="ChEBI" id="CHEBI:58359"/>
    </ligand>
</feature>
<feature type="binding site" evidence="1">
    <location>
        <position position="465"/>
    </location>
    <ligand>
        <name>L-glutamine</name>
        <dbReference type="ChEBI" id="CHEBI:58359"/>
    </ligand>
</feature>
<reference key="1">
    <citation type="journal article" date="2005" name="Proc. Natl. Acad. Sci. U.S.A.">
        <title>Complete genome sequence of the probiotic lactic acid bacterium Lactobacillus acidophilus NCFM.</title>
        <authorList>
            <person name="Altermann E."/>
            <person name="Russell W.M."/>
            <person name="Azcarate-Peril M.A."/>
            <person name="Barrangou R."/>
            <person name="Buck B.L."/>
            <person name="McAuliffe O."/>
            <person name="Souther N."/>
            <person name="Dobson A."/>
            <person name="Duong T."/>
            <person name="Callanan M."/>
            <person name="Lick S."/>
            <person name="Hamrick A."/>
            <person name="Cano R."/>
            <person name="Klaenhammer T.R."/>
        </authorList>
    </citation>
    <scope>NUCLEOTIDE SEQUENCE [LARGE SCALE GENOMIC DNA]</scope>
    <source>
        <strain>ATCC 700396 / NCK56 / N2 / NCFM</strain>
    </source>
</reference>
<proteinExistence type="inferred from homology"/>
<name>PYRG_LACAC</name>